<evidence type="ECO:0000250" key="1"/>
<evidence type="ECO:0000255" key="2"/>
<evidence type="ECO:0000269" key="3">
    <source>
    </source>
</evidence>
<evidence type="ECO:0000305" key="4"/>
<dbReference type="EMBL" id="M10148">
    <property type="protein sequence ID" value="AAA49465.1"/>
    <property type="molecule type" value="mRNA"/>
</dbReference>
<dbReference type="PIR" id="A22592">
    <property type="entry name" value="A22592"/>
</dbReference>
<dbReference type="SMR" id="P07835"/>
<dbReference type="GO" id="GO:0005576">
    <property type="term" value="C:extracellular region"/>
    <property type="evidence" value="ECO:0007669"/>
    <property type="project" value="UniProtKB-SubCell"/>
</dbReference>
<dbReference type="GO" id="GO:0016172">
    <property type="term" value="F:antifreeze activity"/>
    <property type="evidence" value="ECO:0007669"/>
    <property type="project" value="InterPro"/>
</dbReference>
<dbReference type="InterPro" id="IPR000104">
    <property type="entry name" value="Antifreeze_1"/>
</dbReference>
<dbReference type="PRINTS" id="PR00308">
    <property type="entry name" value="ANTIFREEZEI"/>
</dbReference>
<protein>
    <recommendedName>
        <fullName>Ice-structuring protein 2A7</fullName>
        <shortName>ISP 2A7</shortName>
    </recommendedName>
    <alternativeName>
        <fullName>Antifreeze protein IIA7</fullName>
        <shortName>AFP</shortName>
    </alternativeName>
</protein>
<accession>P07835</accession>
<sequence length="91" mass="8326">MALSLFTVGQLIFLFWTMRITEANPDPAAKAVPAAAAPDTASDAAAAAAATAATAAAAAAATAATAAKAAALTAANAAAAAAATAAAAARG</sequence>
<feature type="signal peptide" evidence="2">
    <location>
        <begin position="1"/>
        <end position="21"/>
    </location>
</feature>
<feature type="propeptide" id="PRO_0000001687" description="Removed by a dipeptidylpeptidase" evidence="4">
    <location>
        <begin position="22"/>
        <end position="39"/>
    </location>
</feature>
<feature type="chain" id="PRO_0000001688" description="Ice-structuring protein 2A7">
    <location>
        <begin position="40"/>
        <end position="91"/>
    </location>
</feature>
<comment type="function">
    <text evidence="1">Contributes to protect fish blood from freezing at subzero sea water temperatures. Lowers the blood freezing point. Binds to nascent ice crystals and prevents further growth (By similarity).</text>
</comment>
<comment type="subcellular location">
    <subcellularLocation>
        <location evidence="3">Secreted</location>
    </subcellularLocation>
</comment>
<comment type="tissue specificity">
    <text evidence="3">Detected in blood serum (at protein level).</text>
</comment>
<comment type="similarity">
    <text evidence="4">Belongs to the type-I AFP family.</text>
</comment>
<reference key="1">
    <citation type="journal article" date="1984" name="J. Biol. Chem.">
        <title>Winter flounder antifreeze proteins: a multigene family.</title>
        <authorList>
            <person name="Gourlie B."/>
            <person name="Lin Y."/>
            <person name="Price J."/>
            <person name="Devries A.L."/>
            <person name="Powers D."/>
            <person name="Huang R.C.C."/>
        </authorList>
    </citation>
    <scope>NUCLEOTIDE SEQUENCE [MRNA]</scope>
    <scope>PARTIAL PROTEIN SEQUENCE</scope>
    <scope>SUBCELLULAR LOCATION</scope>
    <scope>TISSUE SPECIFICITY</scope>
</reference>
<name>ANPX_PSEAM</name>
<organism>
    <name type="scientific">Pseudopleuronectes americanus</name>
    <name type="common">Winter flounder</name>
    <name type="synonym">Pleuronectes americanus</name>
    <dbReference type="NCBI Taxonomy" id="8265"/>
    <lineage>
        <taxon>Eukaryota</taxon>
        <taxon>Metazoa</taxon>
        <taxon>Chordata</taxon>
        <taxon>Craniata</taxon>
        <taxon>Vertebrata</taxon>
        <taxon>Euteleostomi</taxon>
        <taxon>Actinopterygii</taxon>
        <taxon>Neopterygii</taxon>
        <taxon>Teleostei</taxon>
        <taxon>Neoteleostei</taxon>
        <taxon>Acanthomorphata</taxon>
        <taxon>Carangaria</taxon>
        <taxon>Pleuronectiformes</taxon>
        <taxon>Pleuronectoidei</taxon>
        <taxon>Pleuronectidae</taxon>
        <taxon>Pseudopleuronectes</taxon>
    </lineage>
</organism>
<proteinExistence type="evidence at protein level"/>
<keyword id="KW-0047">Antifreeze protein</keyword>
<keyword id="KW-0903">Direct protein sequencing</keyword>
<keyword id="KW-0677">Repeat</keyword>
<keyword id="KW-0964">Secreted</keyword>
<keyword id="KW-0732">Signal</keyword>